<name>RS21_CAMJJ</name>
<evidence type="ECO:0000255" key="1">
    <source>
        <dbReference type="HAMAP-Rule" id="MF_00358"/>
    </source>
</evidence>
<evidence type="ECO:0000305" key="2"/>
<proteinExistence type="inferred from homology"/>
<reference key="1">
    <citation type="submission" date="2006-12" db="EMBL/GenBank/DDBJ databases">
        <authorList>
            <person name="Fouts D.E."/>
            <person name="Nelson K.E."/>
            <person name="Sebastian Y."/>
        </authorList>
    </citation>
    <scope>NUCLEOTIDE SEQUENCE [LARGE SCALE GENOMIC DNA]</scope>
    <source>
        <strain>81-176</strain>
    </source>
</reference>
<feature type="chain" id="PRO_1000005106" description="Small ribosomal subunit protein bS21">
    <location>
        <begin position="1"/>
        <end position="70"/>
    </location>
</feature>
<comment type="similarity">
    <text evidence="1">Belongs to the bacterial ribosomal protein bS21 family.</text>
</comment>
<protein>
    <recommendedName>
        <fullName evidence="1">Small ribosomal subunit protein bS21</fullName>
    </recommendedName>
    <alternativeName>
        <fullName evidence="2">30S ribosomal protein S21</fullName>
    </alternativeName>
</protein>
<accession>A1VY90</accession>
<keyword id="KW-0687">Ribonucleoprotein</keyword>
<keyword id="KW-0689">Ribosomal protein</keyword>
<organism>
    <name type="scientific">Campylobacter jejuni subsp. jejuni serotype O:23/36 (strain 81-176)</name>
    <dbReference type="NCBI Taxonomy" id="354242"/>
    <lineage>
        <taxon>Bacteria</taxon>
        <taxon>Pseudomonadati</taxon>
        <taxon>Campylobacterota</taxon>
        <taxon>Epsilonproteobacteria</taxon>
        <taxon>Campylobacterales</taxon>
        <taxon>Campylobacteraceae</taxon>
        <taxon>Campylobacter</taxon>
    </lineage>
</organism>
<sequence>MPGIKVHPNESFDEAYRKFKKQVDRNLVVTEVRARRFFEPMTEIRKKQKISARKKMLKRLYMLRRYESRL</sequence>
<gene>
    <name evidence="1" type="primary">rpsU</name>
    <name type="ordered locus">CJJ81176_0393</name>
</gene>
<dbReference type="EMBL" id="CP000538">
    <property type="protein sequence ID" value="EAQ73342.1"/>
    <property type="molecule type" value="Genomic_DNA"/>
</dbReference>
<dbReference type="RefSeq" id="WP_002780697.1">
    <property type="nucleotide sequence ID" value="NC_008787.1"/>
</dbReference>
<dbReference type="SMR" id="A1VY90"/>
<dbReference type="GeneID" id="98394943"/>
<dbReference type="KEGG" id="cjj:CJJ81176_0393"/>
<dbReference type="eggNOG" id="COG0828">
    <property type="taxonomic scope" value="Bacteria"/>
</dbReference>
<dbReference type="HOGENOM" id="CLU_159258_1_1_7"/>
<dbReference type="Proteomes" id="UP000000646">
    <property type="component" value="Chromosome"/>
</dbReference>
<dbReference type="GO" id="GO:1990904">
    <property type="term" value="C:ribonucleoprotein complex"/>
    <property type="evidence" value="ECO:0007669"/>
    <property type="project" value="UniProtKB-KW"/>
</dbReference>
<dbReference type="GO" id="GO:0005840">
    <property type="term" value="C:ribosome"/>
    <property type="evidence" value="ECO:0007669"/>
    <property type="project" value="UniProtKB-KW"/>
</dbReference>
<dbReference type="GO" id="GO:0003735">
    <property type="term" value="F:structural constituent of ribosome"/>
    <property type="evidence" value="ECO:0007669"/>
    <property type="project" value="InterPro"/>
</dbReference>
<dbReference type="GO" id="GO:0006412">
    <property type="term" value="P:translation"/>
    <property type="evidence" value="ECO:0007669"/>
    <property type="project" value="UniProtKB-UniRule"/>
</dbReference>
<dbReference type="Gene3D" id="1.20.5.1150">
    <property type="entry name" value="Ribosomal protein S8"/>
    <property type="match status" value="1"/>
</dbReference>
<dbReference type="HAMAP" id="MF_00358">
    <property type="entry name" value="Ribosomal_bS21"/>
    <property type="match status" value="1"/>
</dbReference>
<dbReference type="InterPro" id="IPR001911">
    <property type="entry name" value="Ribosomal_bS21"/>
</dbReference>
<dbReference type="InterPro" id="IPR038380">
    <property type="entry name" value="Ribosomal_bS21_sf"/>
</dbReference>
<dbReference type="NCBIfam" id="TIGR00030">
    <property type="entry name" value="S21p"/>
    <property type="match status" value="1"/>
</dbReference>
<dbReference type="Pfam" id="PF01165">
    <property type="entry name" value="Ribosomal_S21"/>
    <property type="match status" value="1"/>
</dbReference>
<dbReference type="PRINTS" id="PR00976">
    <property type="entry name" value="RIBOSOMALS21"/>
</dbReference>